<comment type="function">
    <text evidence="1">Catalyzes the reversible isomerization of glucose-6-phosphate to fructose-6-phosphate.</text>
</comment>
<comment type="catalytic activity">
    <reaction evidence="1">
        <text>alpha-D-glucose 6-phosphate = beta-D-fructose 6-phosphate</text>
        <dbReference type="Rhea" id="RHEA:11816"/>
        <dbReference type="ChEBI" id="CHEBI:57634"/>
        <dbReference type="ChEBI" id="CHEBI:58225"/>
        <dbReference type="EC" id="5.3.1.9"/>
    </reaction>
</comment>
<comment type="pathway">
    <text evidence="1">Carbohydrate biosynthesis; gluconeogenesis.</text>
</comment>
<comment type="pathway">
    <text evidence="1">Carbohydrate degradation; glycolysis; D-glyceraldehyde 3-phosphate and glycerone phosphate from D-glucose: step 2/4.</text>
</comment>
<comment type="subcellular location">
    <subcellularLocation>
        <location evidence="1">Cytoplasm</location>
    </subcellularLocation>
</comment>
<comment type="similarity">
    <text evidence="1">Belongs to the GPI family.</text>
</comment>
<proteinExistence type="inferred from homology"/>
<sequence>MTHIQLDYGKALEFFGQHEIDQQQDIVKTIHKTIHEGTGAGSDFLGWVNLPEDYDKKEFSRIVEASKRIKSNSDVLVVIGIGGSYLGARAAIEMLTSSFRNSNEYPEIVFVGNHLSSTYTKELVDYLSDKDFSVNVISKSGTTTEPAVAFRLFKQLVEDKYGKAEAKKRIFATTDKAKGALKQLADNEGYETFVVPDDVGGRYSVLTAVGLLPIATAGINIESIMIGANKARKELSSDKLDENIAYQYATIRNILYSKGYTTEMLINYEPSMQYFNEWWKQLYGESEGKDFKGIYPSSANYTTDLHSLGQYVQEGRRFLFETVVKVNNPKHDITIEEDSDDLDGLNYLAGKTIDEVNTKAFEGTLLAHTDGGVPNVVVNIPRLDEETFGYVVYFFELACAMSGYQLGVNPFNQPGVEAYKQNMFALLGKPGFEDKKKELEERL</sequence>
<organism>
    <name type="scientific">Staphylococcus haemolyticus (strain JCSC1435)</name>
    <dbReference type="NCBI Taxonomy" id="279808"/>
    <lineage>
        <taxon>Bacteria</taxon>
        <taxon>Bacillati</taxon>
        <taxon>Bacillota</taxon>
        <taxon>Bacilli</taxon>
        <taxon>Bacillales</taxon>
        <taxon>Staphylococcaceae</taxon>
        <taxon>Staphylococcus</taxon>
    </lineage>
</organism>
<gene>
    <name evidence="1" type="primary">pgi</name>
    <name type="ordered locus">SH1988</name>
</gene>
<protein>
    <recommendedName>
        <fullName evidence="1">Glucose-6-phosphate isomerase</fullName>
        <shortName evidence="1">GPI</shortName>
        <ecNumber evidence="1">5.3.1.9</ecNumber>
    </recommendedName>
    <alternativeName>
        <fullName evidence="1">Phosphoglucose isomerase</fullName>
        <shortName evidence="1">PGI</shortName>
    </alternativeName>
    <alternativeName>
        <fullName evidence="1">Phosphohexose isomerase</fullName>
        <shortName evidence="1">PHI</shortName>
    </alternativeName>
</protein>
<name>G6PI_STAHJ</name>
<evidence type="ECO:0000255" key="1">
    <source>
        <dbReference type="HAMAP-Rule" id="MF_00473"/>
    </source>
</evidence>
<feature type="chain" id="PRO_0000180734" description="Glucose-6-phosphate isomerase">
    <location>
        <begin position="1"/>
        <end position="443"/>
    </location>
</feature>
<feature type="active site" description="Proton donor" evidence="1">
    <location>
        <position position="285"/>
    </location>
</feature>
<feature type="active site" evidence="1">
    <location>
        <position position="306"/>
    </location>
</feature>
<feature type="active site" evidence="1">
    <location>
        <position position="420"/>
    </location>
</feature>
<dbReference type="EC" id="5.3.1.9" evidence="1"/>
<dbReference type="EMBL" id="AP006716">
    <property type="protein sequence ID" value="BAE05297.1"/>
    <property type="molecule type" value="Genomic_DNA"/>
</dbReference>
<dbReference type="RefSeq" id="WP_011276255.1">
    <property type="nucleotide sequence ID" value="NC_007168.1"/>
</dbReference>
<dbReference type="SMR" id="Q4L4X8"/>
<dbReference type="KEGG" id="sha:SH1988"/>
<dbReference type="eggNOG" id="COG0166">
    <property type="taxonomic scope" value="Bacteria"/>
</dbReference>
<dbReference type="HOGENOM" id="CLU_037303_0_1_9"/>
<dbReference type="OrthoDB" id="140919at2"/>
<dbReference type="UniPathway" id="UPA00109">
    <property type="reaction ID" value="UER00181"/>
</dbReference>
<dbReference type="UniPathway" id="UPA00138"/>
<dbReference type="Proteomes" id="UP000000543">
    <property type="component" value="Chromosome"/>
</dbReference>
<dbReference type="GO" id="GO:0005829">
    <property type="term" value="C:cytosol"/>
    <property type="evidence" value="ECO:0007669"/>
    <property type="project" value="TreeGrafter"/>
</dbReference>
<dbReference type="GO" id="GO:0097367">
    <property type="term" value="F:carbohydrate derivative binding"/>
    <property type="evidence" value="ECO:0007669"/>
    <property type="project" value="InterPro"/>
</dbReference>
<dbReference type="GO" id="GO:0004347">
    <property type="term" value="F:glucose-6-phosphate isomerase activity"/>
    <property type="evidence" value="ECO:0007669"/>
    <property type="project" value="UniProtKB-UniRule"/>
</dbReference>
<dbReference type="GO" id="GO:0048029">
    <property type="term" value="F:monosaccharide binding"/>
    <property type="evidence" value="ECO:0007669"/>
    <property type="project" value="TreeGrafter"/>
</dbReference>
<dbReference type="GO" id="GO:0006094">
    <property type="term" value="P:gluconeogenesis"/>
    <property type="evidence" value="ECO:0007669"/>
    <property type="project" value="UniProtKB-UniRule"/>
</dbReference>
<dbReference type="GO" id="GO:0051156">
    <property type="term" value="P:glucose 6-phosphate metabolic process"/>
    <property type="evidence" value="ECO:0007669"/>
    <property type="project" value="TreeGrafter"/>
</dbReference>
<dbReference type="GO" id="GO:0006096">
    <property type="term" value="P:glycolytic process"/>
    <property type="evidence" value="ECO:0007669"/>
    <property type="project" value="UniProtKB-UniRule"/>
</dbReference>
<dbReference type="CDD" id="cd05015">
    <property type="entry name" value="SIS_PGI_1"/>
    <property type="match status" value="1"/>
</dbReference>
<dbReference type="CDD" id="cd05016">
    <property type="entry name" value="SIS_PGI_2"/>
    <property type="match status" value="1"/>
</dbReference>
<dbReference type="FunFam" id="3.40.50.10490:FF:000015">
    <property type="entry name" value="Glucose-6-phosphate isomerase"/>
    <property type="match status" value="1"/>
</dbReference>
<dbReference type="FunFam" id="3.40.50.10490:FF:000016">
    <property type="entry name" value="Glucose-6-phosphate isomerase"/>
    <property type="match status" value="1"/>
</dbReference>
<dbReference type="Gene3D" id="3.40.50.10490">
    <property type="entry name" value="Glucose-6-phosphate isomerase like protein, domain 1"/>
    <property type="match status" value="3"/>
</dbReference>
<dbReference type="HAMAP" id="MF_00473">
    <property type="entry name" value="G6P_isomerase"/>
    <property type="match status" value="1"/>
</dbReference>
<dbReference type="InterPro" id="IPR001672">
    <property type="entry name" value="G6P_Isomerase"/>
</dbReference>
<dbReference type="InterPro" id="IPR018189">
    <property type="entry name" value="Phosphoglucose_isomerase_CS"/>
</dbReference>
<dbReference type="InterPro" id="IPR046348">
    <property type="entry name" value="SIS_dom_sf"/>
</dbReference>
<dbReference type="InterPro" id="IPR035476">
    <property type="entry name" value="SIS_PGI_1"/>
</dbReference>
<dbReference type="InterPro" id="IPR035482">
    <property type="entry name" value="SIS_PGI_2"/>
</dbReference>
<dbReference type="NCBIfam" id="NF010697">
    <property type="entry name" value="PRK14097.1"/>
    <property type="match status" value="1"/>
</dbReference>
<dbReference type="PANTHER" id="PTHR11469">
    <property type="entry name" value="GLUCOSE-6-PHOSPHATE ISOMERASE"/>
    <property type="match status" value="1"/>
</dbReference>
<dbReference type="PANTHER" id="PTHR11469:SF1">
    <property type="entry name" value="GLUCOSE-6-PHOSPHATE ISOMERASE"/>
    <property type="match status" value="1"/>
</dbReference>
<dbReference type="Pfam" id="PF00342">
    <property type="entry name" value="PGI"/>
    <property type="match status" value="1"/>
</dbReference>
<dbReference type="PRINTS" id="PR00662">
    <property type="entry name" value="G6PISOMERASE"/>
</dbReference>
<dbReference type="SUPFAM" id="SSF53697">
    <property type="entry name" value="SIS domain"/>
    <property type="match status" value="1"/>
</dbReference>
<dbReference type="PROSITE" id="PS00765">
    <property type="entry name" value="P_GLUCOSE_ISOMERASE_1"/>
    <property type="match status" value="1"/>
</dbReference>
<dbReference type="PROSITE" id="PS00174">
    <property type="entry name" value="P_GLUCOSE_ISOMERASE_2"/>
    <property type="match status" value="1"/>
</dbReference>
<dbReference type="PROSITE" id="PS51463">
    <property type="entry name" value="P_GLUCOSE_ISOMERASE_3"/>
    <property type="match status" value="1"/>
</dbReference>
<accession>Q4L4X8</accession>
<reference key="1">
    <citation type="journal article" date="2005" name="J. Bacteriol.">
        <title>Whole-genome sequencing of Staphylococcus haemolyticus uncovers the extreme plasticity of its genome and the evolution of human-colonizing staphylococcal species.</title>
        <authorList>
            <person name="Takeuchi F."/>
            <person name="Watanabe S."/>
            <person name="Baba T."/>
            <person name="Yuzawa H."/>
            <person name="Ito T."/>
            <person name="Morimoto Y."/>
            <person name="Kuroda M."/>
            <person name="Cui L."/>
            <person name="Takahashi M."/>
            <person name="Ankai A."/>
            <person name="Baba S."/>
            <person name="Fukui S."/>
            <person name="Lee J.C."/>
            <person name="Hiramatsu K."/>
        </authorList>
    </citation>
    <scope>NUCLEOTIDE SEQUENCE [LARGE SCALE GENOMIC DNA]</scope>
    <source>
        <strain>JCSC1435</strain>
    </source>
</reference>
<keyword id="KW-0963">Cytoplasm</keyword>
<keyword id="KW-0312">Gluconeogenesis</keyword>
<keyword id="KW-0324">Glycolysis</keyword>
<keyword id="KW-0413">Isomerase</keyword>